<organism>
    <name type="scientific">Desulfitobacterium hafniense (strain DSM 10664 / DCB-2)</name>
    <dbReference type="NCBI Taxonomy" id="272564"/>
    <lineage>
        <taxon>Bacteria</taxon>
        <taxon>Bacillati</taxon>
        <taxon>Bacillota</taxon>
        <taxon>Clostridia</taxon>
        <taxon>Eubacteriales</taxon>
        <taxon>Desulfitobacteriaceae</taxon>
        <taxon>Desulfitobacterium</taxon>
    </lineage>
</organism>
<comment type="function">
    <text evidence="1">Catalyzes the NADPH-dependent reduction of L-glutamate 5-phosphate into L-glutamate 5-semialdehyde and phosphate. The product spontaneously undergoes cyclization to form 1-pyrroline-5-carboxylate.</text>
</comment>
<comment type="catalytic activity">
    <reaction evidence="1">
        <text>L-glutamate 5-semialdehyde + phosphate + NADP(+) = L-glutamyl 5-phosphate + NADPH + H(+)</text>
        <dbReference type="Rhea" id="RHEA:19541"/>
        <dbReference type="ChEBI" id="CHEBI:15378"/>
        <dbReference type="ChEBI" id="CHEBI:43474"/>
        <dbReference type="ChEBI" id="CHEBI:57783"/>
        <dbReference type="ChEBI" id="CHEBI:58066"/>
        <dbReference type="ChEBI" id="CHEBI:58274"/>
        <dbReference type="ChEBI" id="CHEBI:58349"/>
        <dbReference type="EC" id="1.2.1.41"/>
    </reaction>
</comment>
<comment type="pathway">
    <text evidence="1">Amino-acid biosynthesis; L-proline biosynthesis; L-glutamate 5-semialdehyde from L-glutamate: step 2/2.</text>
</comment>
<comment type="subcellular location">
    <subcellularLocation>
        <location evidence="1">Cytoplasm</location>
    </subcellularLocation>
</comment>
<comment type="similarity">
    <text evidence="1">Belongs to the gamma-glutamyl phosphate reductase family.</text>
</comment>
<name>PROA_DESHD</name>
<evidence type="ECO:0000255" key="1">
    <source>
        <dbReference type="HAMAP-Rule" id="MF_00412"/>
    </source>
</evidence>
<keyword id="KW-0028">Amino-acid biosynthesis</keyword>
<keyword id="KW-0963">Cytoplasm</keyword>
<keyword id="KW-0521">NADP</keyword>
<keyword id="KW-0560">Oxidoreductase</keyword>
<keyword id="KW-0641">Proline biosynthesis</keyword>
<proteinExistence type="inferred from homology"/>
<accession>B8FUB6</accession>
<feature type="chain" id="PRO_1000193595" description="Gamma-glutamyl phosphate reductase">
    <location>
        <begin position="1"/>
        <end position="417"/>
    </location>
</feature>
<protein>
    <recommendedName>
        <fullName evidence="1">Gamma-glutamyl phosphate reductase</fullName>
        <shortName evidence="1">GPR</shortName>
        <ecNumber evidence="1">1.2.1.41</ecNumber>
    </recommendedName>
    <alternativeName>
        <fullName evidence="1">Glutamate-5-semialdehyde dehydrogenase</fullName>
    </alternativeName>
    <alternativeName>
        <fullName evidence="1">Glutamyl-gamma-semialdehyde dehydrogenase</fullName>
        <shortName evidence="1">GSA dehydrogenase</shortName>
    </alternativeName>
</protein>
<dbReference type="EC" id="1.2.1.41" evidence="1"/>
<dbReference type="EMBL" id="CP001336">
    <property type="protein sequence ID" value="ACL20530.1"/>
    <property type="molecule type" value="Genomic_DNA"/>
</dbReference>
<dbReference type="RefSeq" id="WP_015944065.1">
    <property type="nucleotide sequence ID" value="NC_011830.1"/>
</dbReference>
<dbReference type="SMR" id="B8FUB6"/>
<dbReference type="KEGG" id="dhd:Dhaf_2502"/>
<dbReference type="HOGENOM" id="CLU_030231_0_0_9"/>
<dbReference type="UniPathway" id="UPA00098">
    <property type="reaction ID" value="UER00360"/>
</dbReference>
<dbReference type="Proteomes" id="UP000007726">
    <property type="component" value="Chromosome"/>
</dbReference>
<dbReference type="GO" id="GO:0005737">
    <property type="term" value="C:cytoplasm"/>
    <property type="evidence" value="ECO:0007669"/>
    <property type="project" value="UniProtKB-SubCell"/>
</dbReference>
<dbReference type="GO" id="GO:0004350">
    <property type="term" value="F:glutamate-5-semialdehyde dehydrogenase activity"/>
    <property type="evidence" value="ECO:0007669"/>
    <property type="project" value="UniProtKB-UniRule"/>
</dbReference>
<dbReference type="GO" id="GO:0050661">
    <property type="term" value="F:NADP binding"/>
    <property type="evidence" value="ECO:0007669"/>
    <property type="project" value="InterPro"/>
</dbReference>
<dbReference type="GO" id="GO:0055129">
    <property type="term" value="P:L-proline biosynthetic process"/>
    <property type="evidence" value="ECO:0007669"/>
    <property type="project" value="UniProtKB-UniRule"/>
</dbReference>
<dbReference type="CDD" id="cd07079">
    <property type="entry name" value="ALDH_F18-19_ProA-GPR"/>
    <property type="match status" value="1"/>
</dbReference>
<dbReference type="FunFam" id="3.40.309.10:FF:000006">
    <property type="entry name" value="Gamma-glutamyl phosphate reductase"/>
    <property type="match status" value="1"/>
</dbReference>
<dbReference type="Gene3D" id="3.40.605.10">
    <property type="entry name" value="Aldehyde Dehydrogenase, Chain A, domain 1"/>
    <property type="match status" value="1"/>
</dbReference>
<dbReference type="Gene3D" id="3.40.309.10">
    <property type="entry name" value="Aldehyde Dehydrogenase, Chain A, domain 2"/>
    <property type="match status" value="1"/>
</dbReference>
<dbReference type="HAMAP" id="MF_00412">
    <property type="entry name" value="ProA"/>
    <property type="match status" value="1"/>
</dbReference>
<dbReference type="InterPro" id="IPR016161">
    <property type="entry name" value="Ald_DH/histidinol_DH"/>
</dbReference>
<dbReference type="InterPro" id="IPR016163">
    <property type="entry name" value="Ald_DH_C"/>
</dbReference>
<dbReference type="InterPro" id="IPR016162">
    <property type="entry name" value="Ald_DH_N"/>
</dbReference>
<dbReference type="InterPro" id="IPR015590">
    <property type="entry name" value="Aldehyde_DH_dom"/>
</dbReference>
<dbReference type="InterPro" id="IPR020593">
    <property type="entry name" value="G-glutamylP_reductase_CS"/>
</dbReference>
<dbReference type="InterPro" id="IPR012134">
    <property type="entry name" value="Glu-5-SA_DH"/>
</dbReference>
<dbReference type="InterPro" id="IPR000965">
    <property type="entry name" value="GPR_dom"/>
</dbReference>
<dbReference type="NCBIfam" id="NF001221">
    <property type="entry name" value="PRK00197.1"/>
    <property type="match status" value="1"/>
</dbReference>
<dbReference type="NCBIfam" id="TIGR00407">
    <property type="entry name" value="proA"/>
    <property type="match status" value="1"/>
</dbReference>
<dbReference type="PANTHER" id="PTHR11063:SF8">
    <property type="entry name" value="DELTA-1-PYRROLINE-5-CARBOXYLATE SYNTHASE"/>
    <property type="match status" value="1"/>
</dbReference>
<dbReference type="PANTHER" id="PTHR11063">
    <property type="entry name" value="GLUTAMATE SEMIALDEHYDE DEHYDROGENASE"/>
    <property type="match status" value="1"/>
</dbReference>
<dbReference type="Pfam" id="PF00171">
    <property type="entry name" value="Aldedh"/>
    <property type="match status" value="1"/>
</dbReference>
<dbReference type="PIRSF" id="PIRSF000151">
    <property type="entry name" value="GPR"/>
    <property type="match status" value="1"/>
</dbReference>
<dbReference type="SUPFAM" id="SSF53720">
    <property type="entry name" value="ALDH-like"/>
    <property type="match status" value="1"/>
</dbReference>
<dbReference type="PROSITE" id="PS01223">
    <property type="entry name" value="PROA"/>
    <property type="match status" value="1"/>
</dbReference>
<reference key="1">
    <citation type="journal article" date="2012" name="BMC Microbiol.">
        <title>Genome sequence of Desulfitobacterium hafniense DCB-2, a Gram-positive anaerobe capable of dehalogenation and metal reduction.</title>
        <authorList>
            <person name="Kim S.H."/>
            <person name="Harzman C."/>
            <person name="Davis J.K."/>
            <person name="Hutcheson R."/>
            <person name="Broderick J.B."/>
            <person name="Marsh T.L."/>
            <person name="Tiedje J.M."/>
        </authorList>
    </citation>
    <scope>NUCLEOTIDE SEQUENCE [LARGE SCALE GENOMIC DNA]</scope>
    <source>
        <strain>DSM 10664 / DCB-2</strain>
    </source>
</reference>
<gene>
    <name evidence="1" type="primary">proA</name>
    <name type="ordered locus">Dhaf_2502</name>
</gene>
<sequence>MDFAPELITIGQKAKDAARKLAYAGTAAKNKALLAMAEALLNHEQKILEANRKDVEAAIQKGTKKSLVNRLALTSEGIRQMSDALKEVVNLGDPVGEGEFWTRPNGLRIQRTRVPLGVVAMIYEARPNVTVDAAALCLKSGNAVILRGGSEAIESNKILSKVIAGAAESQGMPTACIQLLENTNRQWVQQLMKMNGYVDVIIPRGGAGLIETVVKEATVPVIETGTGVCHAYVDGEADLAKGVSIVFNAKTQKPGVCNALEAVLVNEAVAQEFLPLLGEKFRDYGVEIRGCEKTCAILPYAAKAKEEDWGIEHLDLIISAKVVQGVDEAMDHIYQYGTKHSETIITENYTTAQRFLNEVDAAAVYVNASTRFTDGGRFGFGAEIGISTQKLHARGPMGLQALTTMKYMVYGEDHIVT</sequence>